<comment type="function">
    <text evidence="1">Cell wall formation. Adds enolpyruvyl to UDP-N-acetylglucosamine.</text>
</comment>
<comment type="catalytic activity">
    <reaction evidence="1">
        <text>phosphoenolpyruvate + UDP-N-acetyl-alpha-D-glucosamine = UDP-N-acetyl-3-O-(1-carboxyvinyl)-alpha-D-glucosamine + phosphate</text>
        <dbReference type="Rhea" id="RHEA:18681"/>
        <dbReference type="ChEBI" id="CHEBI:43474"/>
        <dbReference type="ChEBI" id="CHEBI:57705"/>
        <dbReference type="ChEBI" id="CHEBI:58702"/>
        <dbReference type="ChEBI" id="CHEBI:68483"/>
        <dbReference type="EC" id="2.5.1.7"/>
    </reaction>
</comment>
<comment type="pathway">
    <text evidence="1">Cell wall biogenesis; peptidoglycan biosynthesis.</text>
</comment>
<comment type="subcellular location">
    <subcellularLocation>
        <location evidence="1">Cytoplasm</location>
    </subcellularLocation>
</comment>
<comment type="similarity">
    <text evidence="1">Belongs to the EPSP synthase family. MurA subfamily.</text>
</comment>
<sequence>MDKLVIEGGQKLAGEIVVSGAKNAALPILCAGLLSAEPVHLDNVPDLQDVRTTLKLLGQMGVRTESADGKVSLDASKVDNLVAPYELVKTMRASILVLGPLVARFGEAKVSLPGGCAIGARPVDQHIKGLQAMGAEINIEHGFIEARAKRLKGARIITDMITVTGTENLLMAAVLADGETIIENAAREPEVGDLASLLVSMGAKIEGIGTDRLVIQGVDKLHGAKHTVVPDRIEAGTFLCAVAAAGGDVTLRHVRPQILEAVTDKLRDAGVTIEEGDDWMRVRMNQRPKAVSFRTSEYPAFPTDMQAQFMALNTLAEGTSQVVETIFENRFMHVQELNRLGANITIDGKTALVNGVEKLSGAKVMATDLRASASLVIAGLCADGETLIDRIYHLDRGYDRMESKLTAVGAKVRRIKGNQA</sequence>
<gene>
    <name evidence="1" type="primary">murA</name>
    <name type="ordered locus">Bphy_2761</name>
</gene>
<keyword id="KW-0131">Cell cycle</keyword>
<keyword id="KW-0132">Cell division</keyword>
<keyword id="KW-0133">Cell shape</keyword>
<keyword id="KW-0961">Cell wall biogenesis/degradation</keyword>
<keyword id="KW-0963">Cytoplasm</keyword>
<keyword id="KW-0573">Peptidoglycan synthesis</keyword>
<keyword id="KW-0670">Pyruvate</keyword>
<keyword id="KW-1185">Reference proteome</keyword>
<keyword id="KW-0808">Transferase</keyword>
<protein>
    <recommendedName>
        <fullName evidence="1">UDP-N-acetylglucosamine 1-carboxyvinyltransferase</fullName>
        <ecNumber evidence="1">2.5.1.7</ecNumber>
    </recommendedName>
    <alternativeName>
        <fullName evidence="1">Enoylpyruvate transferase</fullName>
    </alternativeName>
    <alternativeName>
        <fullName evidence="1">UDP-N-acetylglucosamine enolpyruvyl transferase</fullName>
        <shortName evidence="1">EPT</shortName>
    </alternativeName>
</protein>
<reference key="1">
    <citation type="journal article" date="2014" name="Stand. Genomic Sci.">
        <title>Complete genome sequence of Burkholderia phymatum STM815(T), a broad host range and efficient nitrogen-fixing symbiont of Mimosa species.</title>
        <authorList>
            <person name="Moulin L."/>
            <person name="Klonowska A."/>
            <person name="Caroline B."/>
            <person name="Booth K."/>
            <person name="Vriezen J.A."/>
            <person name="Melkonian R."/>
            <person name="James E.K."/>
            <person name="Young J.P."/>
            <person name="Bena G."/>
            <person name="Hauser L."/>
            <person name="Land M."/>
            <person name="Kyrpides N."/>
            <person name="Bruce D."/>
            <person name="Chain P."/>
            <person name="Copeland A."/>
            <person name="Pitluck S."/>
            <person name="Woyke T."/>
            <person name="Lizotte-Waniewski M."/>
            <person name="Bristow J."/>
            <person name="Riley M."/>
        </authorList>
    </citation>
    <scope>NUCLEOTIDE SEQUENCE [LARGE SCALE GENOMIC DNA]</scope>
    <source>
        <strain>DSM 17167 / CIP 108236 / LMG 21445 / STM815</strain>
    </source>
</reference>
<feature type="chain" id="PRO_1000094675" description="UDP-N-acetylglucosamine 1-carboxyvinyltransferase">
    <location>
        <begin position="1"/>
        <end position="420"/>
    </location>
</feature>
<feature type="active site" description="Proton donor" evidence="1">
    <location>
        <position position="116"/>
    </location>
</feature>
<feature type="binding site" evidence="1">
    <location>
        <begin position="22"/>
        <end position="23"/>
    </location>
    <ligand>
        <name>phosphoenolpyruvate</name>
        <dbReference type="ChEBI" id="CHEBI:58702"/>
    </ligand>
</feature>
<feature type="binding site" evidence="1">
    <location>
        <position position="92"/>
    </location>
    <ligand>
        <name>UDP-N-acetyl-alpha-D-glucosamine</name>
        <dbReference type="ChEBI" id="CHEBI:57705"/>
    </ligand>
</feature>
<feature type="binding site" evidence="1">
    <location>
        <begin position="121"/>
        <end position="125"/>
    </location>
    <ligand>
        <name>UDP-N-acetyl-alpha-D-glucosamine</name>
        <dbReference type="ChEBI" id="CHEBI:57705"/>
    </ligand>
</feature>
<feature type="binding site" evidence="1">
    <location>
        <position position="304"/>
    </location>
    <ligand>
        <name>UDP-N-acetyl-alpha-D-glucosamine</name>
        <dbReference type="ChEBI" id="CHEBI:57705"/>
    </ligand>
</feature>
<feature type="binding site" evidence="1">
    <location>
        <position position="326"/>
    </location>
    <ligand>
        <name>UDP-N-acetyl-alpha-D-glucosamine</name>
        <dbReference type="ChEBI" id="CHEBI:57705"/>
    </ligand>
</feature>
<feature type="modified residue" description="2-(S-cysteinyl)pyruvic acid O-phosphothioketal" evidence="1">
    <location>
        <position position="116"/>
    </location>
</feature>
<accession>B2JHY7</accession>
<name>MURA_PARP8</name>
<proteinExistence type="inferred from homology"/>
<evidence type="ECO:0000255" key="1">
    <source>
        <dbReference type="HAMAP-Rule" id="MF_00111"/>
    </source>
</evidence>
<organism>
    <name type="scientific">Paraburkholderia phymatum (strain DSM 17167 / CIP 108236 / LMG 21445 / STM815)</name>
    <name type="common">Burkholderia phymatum</name>
    <dbReference type="NCBI Taxonomy" id="391038"/>
    <lineage>
        <taxon>Bacteria</taxon>
        <taxon>Pseudomonadati</taxon>
        <taxon>Pseudomonadota</taxon>
        <taxon>Betaproteobacteria</taxon>
        <taxon>Burkholderiales</taxon>
        <taxon>Burkholderiaceae</taxon>
        <taxon>Paraburkholderia</taxon>
    </lineage>
</organism>
<dbReference type="EC" id="2.5.1.7" evidence="1"/>
<dbReference type="EMBL" id="CP001043">
    <property type="protein sequence ID" value="ACC71933.1"/>
    <property type="molecule type" value="Genomic_DNA"/>
</dbReference>
<dbReference type="RefSeq" id="WP_012402131.1">
    <property type="nucleotide sequence ID" value="NC_010622.1"/>
</dbReference>
<dbReference type="SMR" id="B2JHY7"/>
<dbReference type="STRING" id="391038.Bphy_2761"/>
<dbReference type="KEGG" id="bph:Bphy_2761"/>
<dbReference type="eggNOG" id="COG0766">
    <property type="taxonomic scope" value="Bacteria"/>
</dbReference>
<dbReference type="HOGENOM" id="CLU_027387_0_0_4"/>
<dbReference type="OrthoDB" id="9803760at2"/>
<dbReference type="UniPathway" id="UPA00219"/>
<dbReference type="Proteomes" id="UP000001192">
    <property type="component" value="Chromosome 1"/>
</dbReference>
<dbReference type="GO" id="GO:0005737">
    <property type="term" value="C:cytoplasm"/>
    <property type="evidence" value="ECO:0007669"/>
    <property type="project" value="UniProtKB-SubCell"/>
</dbReference>
<dbReference type="GO" id="GO:0008760">
    <property type="term" value="F:UDP-N-acetylglucosamine 1-carboxyvinyltransferase activity"/>
    <property type="evidence" value="ECO:0007669"/>
    <property type="project" value="UniProtKB-UniRule"/>
</dbReference>
<dbReference type="GO" id="GO:0051301">
    <property type="term" value="P:cell division"/>
    <property type="evidence" value="ECO:0007669"/>
    <property type="project" value="UniProtKB-KW"/>
</dbReference>
<dbReference type="GO" id="GO:0071555">
    <property type="term" value="P:cell wall organization"/>
    <property type="evidence" value="ECO:0007669"/>
    <property type="project" value="UniProtKB-KW"/>
</dbReference>
<dbReference type="GO" id="GO:0009252">
    <property type="term" value="P:peptidoglycan biosynthetic process"/>
    <property type="evidence" value="ECO:0007669"/>
    <property type="project" value="UniProtKB-UniRule"/>
</dbReference>
<dbReference type="GO" id="GO:0008360">
    <property type="term" value="P:regulation of cell shape"/>
    <property type="evidence" value="ECO:0007669"/>
    <property type="project" value="UniProtKB-KW"/>
</dbReference>
<dbReference type="GO" id="GO:0019277">
    <property type="term" value="P:UDP-N-acetylgalactosamine biosynthetic process"/>
    <property type="evidence" value="ECO:0007669"/>
    <property type="project" value="InterPro"/>
</dbReference>
<dbReference type="CDD" id="cd01555">
    <property type="entry name" value="UdpNAET"/>
    <property type="match status" value="1"/>
</dbReference>
<dbReference type="FunFam" id="3.65.10.10:FF:000001">
    <property type="entry name" value="UDP-N-acetylglucosamine 1-carboxyvinyltransferase"/>
    <property type="match status" value="1"/>
</dbReference>
<dbReference type="Gene3D" id="3.65.10.10">
    <property type="entry name" value="Enolpyruvate transferase domain"/>
    <property type="match status" value="2"/>
</dbReference>
<dbReference type="HAMAP" id="MF_00111">
    <property type="entry name" value="MurA"/>
    <property type="match status" value="1"/>
</dbReference>
<dbReference type="InterPro" id="IPR001986">
    <property type="entry name" value="Enolpyruvate_Tfrase_dom"/>
</dbReference>
<dbReference type="InterPro" id="IPR036968">
    <property type="entry name" value="Enolpyruvate_Tfrase_sf"/>
</dbReference>
<dbReference type="InterPro" id="IPR050068">
    <property type="entry name" value="MurA_subfamily"/>
</dbReference>
<dbReference type="InterPro" id="IPR013792">
    <property type="entry name" value="RNA3'P_cycl/enolpyr_Trfase_a/b"/>
</dbReference>
<dbReference type="InterPro" id="IPR005750">
    <property type="entry name" value="UDP_GlcNAc_COvinyl_MurA"/>
</dbReference>
<dbReference type="NCBIfam" id="TIGR01072">
    <property type="entry name" value="murA"/>
    <property type="match status" value="1"/>
</dbReference>
<dbReference type="NCBIfam" id="NF006873">
    <property type="entry name" value="PRK09369.1"/>
    <property type="match status" value="1"/>
</dbReference>
<dbReference type="PANTHER" id="PTHR43783">
    <property type="entry name" value="UDP-N-ACETYLGLUCOSAMINE 1-CARBOXYVINYLTRANSFERASE"/>
    <property type="match status" value="1"/>
</dbReference>
<dbReference type="PANTHER" id="PTHR43783:SF1">
    <property type="entry name" value="UDP-N-ACETYLGLUCOSAMINE 1-CARBOXYVINYLTRANSFERASE"/>
    <property type="match status" value="1"/>
</dbReference>
<dbReference type="Pfam" id="PF00275">
    <property type="entry name" value="EPSP_synthase"/>
    <property type="match status" value="1"/>
</dbReference>
<dbReference type="SUPFAM" id="SSF55205">
    <property type="entry name" value="EPT/RTPC-like"/>
    <property type="match status" value="1"/>
</dbReference>